<reference key="1">
    <citation type="journal article" date="2005" name="J. Biol. Chem.">
        <title>Hemextin AB complex, a unique anticoagulant protein complex from Hemachatus haemachatus (African Ringhals cobra) venom that inhibits clot initiation and factor VIIa activity.</title>
        <authorList>
            <person name="Banerjee Y."/>
            <person name="Mizuguchi J."/>
            <person name="Iwanaga S."/>
            <person name="Kini R.M."/>
        </authorList>
    </citation>
    <scope>PROTEIN SEQUENCE</scope>
    <scope>SUBCELLULAR LOCATION</scope>
    <scope>FUNCTION</scope>
    <scope>MASS SPECTROMETRY</scope>
    <scope>SUBUNIT</scope>
    <source>
        <tissue>Venom</tissue>
    </source>
</reference>
<reference key="2">
    <citation type="journal article" date="2006" name="J. Biol. Chem.">
        <authorList>
            <person name="Banerjee Y."/>
            <person name="Mizuguchi J."/>
            <person name="Iwanaga S."/>
            <person name="Kini R.M."/>
        </authorList>
    </citation>
    <scope>ERRATUM OF PUBMED:16204244</scope>
</reference>
<reference key="3">
    <citation type="journal article" date="2007" name="Acta Crystallogr. F">
        <title>Crystallization and preliminary X-ray diffraction analysis of hemextin A: a unique anticoagulant protein from Hemachatus haemachatus venom.</title>
        <authorList>
            <person name="Banerjee Y."/>
            <person name="Kumar S."/>
            <person name="Jobichen C."/>
            <person name="Kini R.M."/>
        </authorList>
    </citation>
    <scope>CRYSTALLIZATION</scope>
</reference>
<reference key="4">
    <citation type="journal article" date="2007" name="Biophys. J.">
        <title>Biophysical characterization of anticoagulant hemextin AB complex from the venom of snake Hemachatus haemachatus.</title>
        <authorList>
            <person name="Banerjee Y."/>
            <person name="Lakshminarayanan R."/>
            <person name="Vivekanandan S."/>
            <person name="Anand G.S."/>
            <person name="Valiyaveettil S."/>
            <person name="Kini R.M."/>
        </authorList>
    </citation>
    <scope>SUBUNIT</scope>
    <source>
        <tissue>Venom</tissue>
    </source>
</reference>
<name>3SBA_HEMHA</name>
<comment type="function">
    <text evidence="1">Hemextin A (monomer): exhibits mild anticoagulant activity. It specifically inhibits the activation of FX (F10) by the TF-FVIIa complex (extrinsic tenase complex (ETC)) by non-competitively inhibiting the enzymatic activity of FVIIa.</text>
</comment>
<comment type="function">
    <text evidence="1">Hemextin AB complex: specifically inhibits the activation of FX (F10) by the TF-FVIIa complex (extrinsic tenase complex (ETC)) (IC(50)= 100 nM, Ki=25 nM) by non-competitively inhibiting the enzymatic activity of FVIIa.</text>
</comment>
<comment type="subunit">
    <text evidence="1 2">Heterotetramer composed of two A and two B chains; non-covalently linked. Does not exist as a complex in the crude venom.</text>
</comment>
<comment type="subcellular location">
    <subcellularLocation>
        <location evidence="1">Secreted</location>
    </subcellularLocation>
</comment>
<comment type="tissue specificity">
    <text evidence="4">Expressed by the venom gland.</text>
</comment>
<comment type="PTM">
    <text evidence="4">May contain several disulfide bonds.</text>
</comment>
<comment type="mass spectrometry" mass="6835.0" method="Electrospray" evidence="1"/>
<comment type="similarity">
    <text evidence="4">Belongs to the three-finger toxin family. Short-chain subfamily. Type IB cytotoxin sub-subfamily.</text>
</comment>
<organism>
    <name type="scientific">Hemachatus haemachatus</name>
    <name type="common">Rinkhals</name>
    <name type="synonym">Sepedon haemachatus</name>
    <dbReference type="NCBI Taxonomy" id="8626"/>
    <lineage>
        <taxon>Eukaryota</taxon>
        <taxon>Metazoa</taxon>
        <taxon>Chordata</taxon>
        <taxon>Craniata</taxon>
        <taxon>Vertebrata</taxon>
        <taxon>Euteleostomi</taxon>
        <taxon>Lepidosauria</taxon>
        <taxon>Squamata</taxon>
        <taxon>Bifurcata</taxon>
        <taxon>Unidentata</taxon>
        <taxon>Episquamata</taxon>
        <taxon>Toxicofera</taxon>
        <taxon>Serpentes</taxon>
        <taxon>Colubroidea</taxon>
        <taxon>Elapidae</taxon>
        <taxon>Elapinae</taxon>
        <taxon>Hemachatus</taxon>
    </lineage>
</organism>
<protein>
    <recommendedName>
        <fullName evidence="3">Hemextin A</fullName>
    </recommendedName>
    <alternativeName>
        <fullName evidence="3">Hemachatus extrinsic tenase inhibitor A</fullName>
    </alternativeName>
</protein>
<dbReference type="SMR" id="P0DQH3"/>
<dbReference type="GO" id="GO:0005576">
    <property type="term" value="C:extracellular region"/>
    <property type="evidence" value="ECO:0007669"/>
    <property type="project" value="UniProtKB-SubCell"/>
</dbReference>
<dbReference type="GO" id="GO:0090729">
    <property type="term" value="F:toxin activity"/>
    <property type="evidence" value="ECO:0007669"/>
    <property type="project" value="UniProtKB-KW"/>
</dbReference>
<dbReference type="Gene3D" id="2.10.60.10">
    <property type="entry name" value="CD59"/>
    <property type="match status" value="1"/>
</dbReference>
<dbReference type="InterPro" id="IPR003572">
    <property type="entry name" value="Cytotoxin_Cobra"/>
</dbReference>
<dbReference type="InterPro" id="IPR045860">
    <property type="entry name" value="Snake_toxin-like_sf"/>
</dbReference>
<dbReference type="InterPro" id="IPR054131">
    <property type="entry name" value="Toxin_cobra-type"/>
</dbReference>
<dbReference type="Pfam" id="PF21947">
    <property type="entry name" value="Toxin_cobra-type"/>
    <property type="match status" value="1"/>
</dbReference>
<dbReference type="PRINTS" id="PR00282">
    <property type="entry name" value="CYTOTOXIN"/>
</dbReference>
<dbReference type="SUPFAM" id="SSF57302">
    <property type="entry name" value="Snake toxin-like"/>
    <property type="match status" value="1"/>
</dbReference>
<keyword id="KW-1203">Blood coagulation cascade inhibiting toxin</keyword>
<keyword id="KW-0903">Direct protein sequencing</keyword>
<keyword id="KW-1015">Disulfide bond</keyword>
<keyword id="KW-1199">Hemostasis impairing toxin</keyword>
<keyword id="KW-0964">Secreted</keyword>
<keyword id="KW-0800">Toxin</keyword>
<sequence length="37" mass="4237">LKCKNKLVPFLSKTCPEGKNLCYKMTLKKVTPKIKRG</sequence>
<proteinExistence type="evidence at protein level"/>
<accession>P0DQH3</accession>
<evidence type="ECO:0000269" key="1">
    <source>
    </source>
</evidence>
<evidence type="ECO:0000269" key="2">
    <source>
    </source>
</evidence>
<evidence type="ECO:0000303" key="3">
    <source>
    </source>
</evidence>
<evidence type="ECO:0000305" key="4"/>
<feature type="chain" id="PRO_0000447301" description="Hemextin A" evidence="1">
    <location>
        <begin position="1"/>
        <end position="37" status="greater than"/>
    </location>
</feature>
<feature type="non-terminal residue">
    <location>
        <position position="37"/>
    </location>
</feature>